<organism>
    <name type="scientific">Fusarium mangiferae</name>
    <name type="common">Mango malformation disease fungus</name>
    <dbReference type="NCBI Taxonomy" id="192010"/>
    <lineage>
        <taxon>Eukaryota</taxon>
        <taxon>Fungi</taxon>
        <taxon>Dikarya</taxon>
        <taxon>Ascomycota</taxon>
        <taxon>Pezizomycotina</taxon>
        <taxon>Sordariomycetes</taxon>
        <taxon>Hypocreomycetidae</taxon>
        <taxon>Hypocreales</taxon>
        <taxon>Nectriaceae</taxon>
        <taxon>Fusarium</taxon>
        <taxon>Fusarium fujikuroi species complex</taxon>
    </lineage>
</organism>
<name>FMN1_FUSMA</name>
<keyword id="KW-0511">Multifunctional enzyme</keyword>
<keyword id="KW-0560">Oxidoreductase</keyword>
<keyword id="KW-0596">Phosphopantetheine</keyword>
<keyword id="KW-0597">Phosphoprotein</keyword>
<keyword id="KW-0808">Transferase</keyword>
<accession>A0A1L7U4V5</accession>
<evidence type="ECO:0000255" key="1"/>
<evidence type="ECO:0000255" key="2">
    <source>
        <dbReference type="PROSITE-ProRule" id="PRU00258"/>
    </source>
</evidence>
<evidence type="ECO:0000255" key="3">
    <source>
        <dbReference type="PROSITE-ProRule" id="PRU01348"/>
    </source>
</evidence>
<evidence type="ECO:0000255" key="4">
    <source>
        <dbReference type="PROSITE-ProRule" id="PRU01363"/>
    </source>
</evidence>
<evidence type="ECO:0000269" key="5">
    <source>
    </source>
</evidence>
<evidence type="ECO:0000303" key="6">
    <source>
    </source>
</evidence>
<evidence type="ECO:0000303" key="7">
    <source ref="2"/>
</evidence>
<evidence type="ECO:0000305" key="8">
    <source>
    </source>
</evidence>
<dbReference type="EC" id="2.3.1.-" evidence="8"/>
<dbReference type="EMBL" id="FCQH01000014">
    <property type="protein sequence ID" value="CVL03383.1"/>
    <property type="molecule type" value="Genomic_DNA"/>
</dbReference>
<dbReference type="SMR" id="A0A1L7U4V5"/>
<dbReference type="VEuPathDB" id="FungiDB:FMAN_15223"/>
<dbReference type="Proteomes" id="UP000184255">
    <property type="component" value="Unassembled WGS sequence"/>
</dbReference>
<dbReference type="GO" id="GO:0004315">
    <property type="term" value="F:3-oxoacyl-[acyl-carrier-protein] synthase activity"/>
    <property type="evidence" value="ECO:0007669"/>
    <property type="project" value="InterPro"/>
</dbReference>
<dbReference type="GO" id="GO:0004312">
    <property type="term" value="F:fatty acid synthase activity"/>
    <property type="evidence" value="ECO:0007669"/>
    <property type="project" value="TreeGrafter"/>
</dbReference>
<dbReference type="GO" id="GO:0016491">
    <property type="term" value="F:oxidoreductase activity"/>
    <property type="evidence" value="ECO:0007669"/>
    <property type="project" value="UniProtKB-KW"/>
</dbReference>
<dbReference type="GO" id="GO:0006633">
    <property type="term" value="P:fatty acid biosynthetic process"/>
    <property type="evidence" value="ECO:0007669"/>
    <property type="project" value="InterPro"/>
</dbReference>
<dbReference type="GO" id="GO:0044550">
    <property type="term" value="P:secondary metabolite biosynthetic process"/>
    <property type="evidence" value="ECO:0007669"/>
    <property type="project" value="TreeGrafter"/>
</dbReference>
<dbReference type="CDD" id="cd00833">
    <property type="entry name" value="PKS"/>
    <property type="match status" value="1"/>
</dbReference>
<dbReference type="Gene3D" id="3.40.47.10">
    <property type="match status" value="1"/>
</dbReference>
<dbReference type="Gene3D" id="1.10.1200.10">
    <property type="entry name" value="ACP-like"/>
    <property type="match status" value="1"/>
</dbReference>
<dbReference type="Gene3D" id="3.40.366.10">
    <property type="entry name" value="Malonyl-Coenzyme A Acyl Carrier Protein, domain 2"/>
    <property type="match status" value="1"/>
</dbReference>
<dbReference type="Gene3D" id="3.40.50.720">
    <property type="entry name" value="NAD(P)-binding Rossmann-like Domain"/>
    <property type="match status" value="2"/>
</dbReference>
<dbReference type="Gene3D" id="3.10.129.110">
    <property type="entry name" value="Polyketide synthase dehydratase"/>
    <property type="match status" value="1"/>
</dbReference>
<dbReference type="Gene3D" id="3.40.50.150">
    <property type="entry name" value="Vaccinia Virus protein VP39"/>
    <property type="match status" value="1"/>
</dbReference>
<dbReference type="InterPro" id="IPR001227">
    <property type="entry name" value="Ac_transferase_dom_sf"/>
</dbReference>
<dbReference type="InterPro" id="IPR036736">
    <property type="entry name" value="ACP-like_sf"/>
</dbReference>
<dbReference type="InterPro" id="IPR014043">
    <property type="entry name" value="Acyl_transferase_dom"/>
</dbReference>
<dbReference type="InterPro" id="IPR016035">
    <property type="entry name" value="Acyl_Trfase/lysoPLipase"/>
</dbReference>
<dbReference type="InterPro" id="IPR018201">
    <property type="entry name" value="Ketoacyl_synth_AS"/>
</dbReference>
<dbReference type="InterPro" id="IPR014031">
    <property type="entry name" value="Ketoacyl_synth_C"/>
</dbReference>
<dbReference type="InterPro" id="IPR014030">
    <property type="entry name" value="Ketoacyl_synth_N"/>
</dbReference>
<dbReference type="InterPro" id="IPR016036">
    <property type="entry name" value="Malonyl_transacylase_ACP-bd"/>
</dbReference>
<dbReference type="InterPro" id="IPR036291">
    <property type="entry name" value="NAD(P)-bd_dom_sf"/>
</dbReference>
<dbReference type="InterPro" id="IPR032821">
    <property type="entry name" value="PKS_assoc"/>
</dbReference>
<dbReference type="InterPro" id="IPR020841">
    <property type="entry name" value="PKS_Beta-ketoAc_synthase_dom"/>
</dbReference>
<dbReference type="InterPro" id="IPR042104">
    <property type="entry name" value="PKS_dehydratase_sf"/>
</dbReference>
<dbReference type="InterPro" id="IPR020807">
    <property type="entry name" value="PKS_DH"/>
</dbReference>
<dbReference type="InterPro" id="IPR049551">
    <property type="entry name" value="PKS_DH_C"/>
</dbReference>
<dbReference type="InterPro" id="IPR049552">
    <property type="entry name" value="PKS_DH_N"/>
</dbReference>
<dbReference type="InterPro" id="IPR013968">
    <property type="entry name" value="PKS_KR"/>
</dbReference>
<dbReference type="InterPro" id="IPR049900">
    <property type="entry name" value="PKS_mFAS_DH"/>
</dbReference>
<dbReference type="InterPro" id="IPR050091">
    <property type="entry name" value="PKS_NRPS_Biosynth_Enz"/>
</dbReference>
<dbReference type="InterPro" id="IPR009081">
    <property type="entry name" value="PP-bd_ACP"/>
</dbReference>
<dbReference type="InterPro" id="IPR006162">
    <property type="entry name" value="Ppantetheine_attach_site"/>
</dbReference>
<dbReference type="InterPro" id="IPR029063">
    <property type="entry name" value="SAM-dependent_MTases_sf"/>
</dbReference>
<dbReference type="InterPro" id="IPR016039">
    <property type="entry name" value="Thiolase-like"/>
</dbReference>
<dbReference type="PANTHER" id="PTHR43775">
    <property type="entry name" value="FATTY ACID SYNTHASE"/>
    <property type="match status" value="1"/>
</dbReference>
<dbReference type="PANTHER" id="PTHR43775:SF20">
    <property type="entry name" value="HYBRID PKS-NRPS SYNTHETASE APDA"/>
    <property type="match status" value="1"/>
</dbReference>
<dbReference type="Pfam" id="PF00698">
    <property type="entry name" value="Acyl_transf_1"/>
    <property type="match status" value="1"/>
</dbReference>
<dbReference type="Pfam" id="PF16197">
    <property type="entry name" value="KAsynt_C_assoc"/>
    <property type="match status" value="1"/>
</dbReference>
<dbReference type="Pfam" id="PF00109">
    <property type="entry name" value="ketoacyl-synt"/>
    <property type="match status" value="1"/>
</dbReference>
<dbReference type="Pfam" id="PF02801">
    <property type="entry name" value="Ketoacyl-synt_C"/>
    <property type="match status" value="1"/>
</dbReference>
<dbReference type="Pfam" id="PF08659">
    <property type="entry name" value="KR"/>
    <property type="match status" value="1"/>
</dbReference>
<dbReference type="Pfam" id="PF21089">
    <property type="entry name" value="PKS_DH_N"/>
    <property type="match status" value="1"/>
</dbReference>
<dbReference type="Pfam" id="PF00550">
    <property type="entry name" value="PP-binding"/>
    <property type="match status" value="1"/>
</dbReference>
<dbReference type="Pfam" id="PF14765">
    <property type="entry name" value="PS-DH"/>
    <property type="match status" value="1"/>
</dbReference>
<dbReference type="SMART" id="SM00827">
    <property type="entry name" value="PKS_AT"/>
    <property type="match status" value="1"/>
</dbReference>
<dbReference type="SMART" id="SM00826">
    <property type="entry name" value="PKS_DH"/>
    <property type="match status" value="1"/>
</dbReference>
<dbReference type="SMART" id="SM00822">
    <property type="entry name" value="PKS_KR"/>
    <property type="match status" value="1"/>
</dbReference>
<dbReference type="SMART" id="SM00825">
    <property type="entry name" value="PKS_KS"/>
    <property type="match status" value="1"/>
</dbReference>
<dbReference type="SUPFAM" id="SSF47336">
    <property type="entry name" value="ACP-like"/>
    <property type="match status" value="1"/>
</dbReference>
<dbReference type="SUPFAM" id="SSF52151">
    <property type="entry name" value="FabD/lysophospholipase-like"/>
    <property type="match status" value="1"/>
</dbReference>
<dbReference type="SUPFAM" id="SSF51735">
    <property type="entry name" value="NAD(P)-binding Rossmann-fold domains"/>
    <property type="match status" value="1"/>
</dbReference>
<dbReference type="SUPFAM" id="SSF55048">
    <property type="entry name" value="Probable ACP-binding domain of malonyl-CoA ACP transacylase"/>
    <property type="match status" value="1"/>
</dbReference>
<dbReference type="SUPFAM" id="SSF53335">
    <property type="entry name" value="S-adenosyl-L-methionine-dependent methyltransferases"/>
    <property type="match status" value="1"/>
</dbReference>
<dbReference type="SUPFAM" id="SSF53901">
    <property type="entry name" value="Thiolase-like"/>
    <property type="match status" value="1"/>
</dbReference>
<dbReference type="PROSITE" id="PS00606">
    <property type="entry name" value="KS3_1"/>
    <property type="match status" value="1"/>
</dbReference>
<dbReference type="PROSITE" id="PS52004">
    <property type="entry name" value="KS3_2"/>
    <property type="match status" value="1"/>
</dbReference>
<dbReference type="PROSITE" id="PS00012">
    <property type="entry name" value="PHOSPHOPANTETHEINE"/>
    <property type="match status" value="1"/>
</dbReference>
<dbReference type="PROSITE" id="PS52019">
    <property type="entry name" value="PKS_MFAS_DH"/>
    <property type="match status" value="1"/>
</dbReference>
<feature type="chain" id="PRO_0000458170" description="Reducing polyketide synthase 8">
    <location>
        <begin position="1"/>
        <end position="2451"/>
    </location>
</feature>
<feature type="domain" description="Ketosynthase family 3 (KS3)" evidence="3 8">
    <location>
        <begin position="12"/>
        <end position="434"/>
    </location>
</feature>
<feature type="domain" description="Malonyl-CoA:ACP transacylase (MAT)" evidence="1 8">
    <location>
        <begin position="538"/>
        <end position="846"/>
    </location>
</feature>
<feature type="domain" description="PKS/mFAS DH" evidence="4 8">
    <location>
        <begin position="940"/>
        <end position="1254"/>
    </location>
</feature>
<feature type="domain" description="Ketoreductase (KR)" evidence="1 8">
    <location>
        <begin position="2088"/>
        <end position="2266"/>
    </location>
</feature>
<feature type="domain" description="Carrier" evidence="2 8">
    <location>
        <begin position="2366"/>
        <end position="2451"/>
    </location>
</feature>
<feature type="region of interest" description="N-terminal hotdog fold" evidence="4">
    <location>
        <begin position="940"/>
        <end position="1085"/>
    </location>
</feature>
<feature type="region of interest" description="C-terminal hotdog fold" evidence="4">
    <location>
        <begin position="1100"/>
        <end position="1254"/>
    </location>
</feature>
<feature type="region of interest" description="Methyltransfrase (MT) domain" evidence="1 8">
    <location>
        <begin position="1294"/>
        <end position="1590"/>
    </location>
</feature>
<feature type="active site" description="For beta-ketoacyl synthase activity" evidence="3">
    <location>
        <position position="174"/>
    </location>
</feature>
<feature type="active site" description="For beta-ketoacyl synthase activity" evidence="3">
    <location>
        <position position="313"/>
    </location>
</feature>
<feature type="active site" description="For beta-ketoacyl synthase activity" evidence="3">
    <location>
        <position position="354"/>
    </location>
</feature>
<feature type="active site" description="Proton acceptor; for dehydratase activity" evidence="4">
    <location>
        <position position="974"/>
    </location>
</feature>
<feature type="active site" description="Proton donor; for dehydratase activity" evidence="4">
    <location>
        <position position="1160"/>
    </location>
</feature>
<feature type="modified residue" description="O-(pantetheine 4'-phosphoryl)serine" evidence="2">
    <location>
        <position position="2404"/>
    </location>
</feature>
<proteinExistence type="evidence at transcript level"/>
<sequence length="2451" mass="268504">MGSITHEPKYTNEPIAIVGSSCRFPGDATSPSKLWDLLKNPRDVVSEIPSTRFNTTGFYHPDSQNHGAHPRAFDRDFFGISPKEAQSMDPQQRMLLETVYEGIESAGYSMQQLRGSNTAVFVGVMFLDYQLISARGLDSLPQYHATGVAMSILANRLSYFYDWKGPSVGIDTACSSSLVALHYAVQTLRSGEAKMAVAAGSNLILVPDLFVSESSLNMLSPNGRSYMWDKDADGYTRGEGTSAVILKTLSQAISDGDHIECIIRETGVNQDGQTPGITMPSPTAQAELIRSTYAKAGLDLRLECDRPQYFEAHGTGTQAGDPREAEAISTVFFPKGSIYDRKLTVGSVKTLIGHLEGSAGLAGVLKTSQALQHGLIPANLHFKTLNPKIEPFYTNLQVPTETQPWPALPNSWTRRASVNSFGFGGTNAHAILEAWNSKGHESDSHSKSVGGLFVLSANSAQSLASRASQLCHYLESNPETDLRRLSYTLFQRANFSFRAAFSATSVQQLTEKLKTAVLNKTSRTASIPENMPPRILGVFTGQGAQWATMGAKLYESSIVFRSAFSRMQDSLDELSVKDGRPSWSLIEELRAPPATSHIGEAAVSQPICTAVQVALVDMLSAAGVQFSGVVGHSSGEIAAAYTAGYLNAHDAIRIAYFRGLHSKKAQGPDGCSGKMMAVGMSIDQAAGFCAESRGTIKIAASNSARSCTLAGDASAIDSAKEKLDAAGTFARVLQVDTAYHSHHMQPVAQPYLDSLQKCSIKINTKPGTNVVWYSSVWGSNGRSRSFSGKDAESLKGQYWVDNMTNTVLFSQAVQRAVNESHVFDFALEVGPHPALKGPATETINNMTGIGLPYSGVLKRGQHDVESFFDALGLLWKTFPLQSGRSIVSFDGIERAFAPGGKNNRLGLLKDLPSYPFDHDSVYWKESRHSAIVRTQNQKRHQLLGSASTFGSGKQREVHWKQVLRLEEIPWLFGHTIQGEYLFPATCYVTMAYEAAIRLVSPAQEIRLVELHDIDVFRALSLKADSPGTEILFAVRITSQLDGVITASWSCYSNPVDFEHGQNLGDMPAQAESHVEGFLRIELGAPRDDILPARSEPILPLIPLDVEELYDTLAVLGHGYKEHFQTPKMLRRLHHAVVSMPAGWHEANSLTRSDVNPAALDTGIHGLLAGYSCPGDRRQRSAYLPSRIDSIRISMVAVPAVDGDGPTELLADSFVTHGDASRISGDINVFNPENNKTHVQIRGVHLLNLPGSLRSSRETYHQDIWERDALCGIEPDRKSIISNNRAQISNLAMRLVLFYCQKVLKELKPFEIMLMGKARKNFLTWVQKVLIPSVRAGEHEANKEWLDDSEAELNQEVERLKLANSADVVLLERLGRNLTSITRGLTAGVKVAEQENALQRFYADSFGFRETTADAAALVSQICHRYPAMKMIEVGAGFGSGLRDALINAAGKRRYTSYTVTNTVEPSDDDSKLIFKLLDIDKDPVQQGFVEASYDLVIATTSYSTKVSQETVINARKLLRPGGFLLLVALTNDYLPVRFVQSLLPRTWLEKDDSRPQIITVSDCDALLKVNGFSGVDVTYTQHFCSVMLSQAVDDVVLAVRDPITVTQKIDAEILLVLDPSPSTIVENLASQLEDRLASFATVRKVSGLENINVAPEAIILNLCDLDTPVFQEMSELRFKGLQEIMRQASVLLWITEGARGGAKPANTMVLGWGRSARLERSTMKLQILDIEQESQTVDPDVICKLLLNLSSSSSDDQDILFTLEPELMLRGNAIYIPRIWPVDGLNELADTRYKDVYVETSATNPFAALDERGILAIERPYGHTPASDLEVLASSVHGFRFQGEENIRQLCISRNVAGESSLTLSDEDSLEILWQYENGNGGIGYPHQLQFLITSAIAEATLRSLSGHVWIHGAPSWLQKGLDLAASRRDDIQLFNTTSDREIVTGNTNFLHPFATERDLVLVKPKDIAAFVCLEDSQQDHNLVGLVRSIWPSIRIELPVLSLNSFDGVVFNGLSKPMFVDLVKWHLSSGTLVSENLAEGAVIPVEHISKKSPSSILPTSVLDRTTTTTITAKLLPPDHDGIFSSKKTYLLLGLAGDFGISIALWMFDSGARHVVLASRNPVVLQPVVDHVAATHGATLRFMAIDICDEGSLSAAWAEIHTSMPPVGGIMNGAMLMRDQLFADQPWSDFSAVMGPKVRGTQNLVALLDREVAPEQLDFVVFFSSAVAVAGNGGQTAYGSSNWFMQGTASNMRQRGYPGCVVHIGGVSGLGYVQRHEKRKMLEDSLYWLMSPVSETDLHDMLAEVIAGDRHDLITGIRGDIRTYTWREQPRLWHYLQSEDDSNDETAKEGSSASLKIQLASSVADPDACLDLLLGGFTSALCGMLHMKPEELDTNVPVASIGIDSLVAVRVREWFMQQVGVEVSVLKVMSLNTPLLALCKDVLAIWRKQVKA</sequence>
<comment type="function">
    <text evidence="5">Reducing polyketide synthase; part of the gene cluster that mediates the biosynthesis of fusamarins, isocoumarin derivatives that show moderate cytotoxicity with IC(50) values between 1 and 50 uM (PubMed:36137261). The polyketide synthase FMN1 probably synthesizes two different polyketides, a tetra- and a pentaketide, containinga varying number of double bonds depending on the selective actions of the trans-enoyl reductase FMN2 (PubMed:36137261). Chain fusion will presumably be mediated by the KS domain before finally offloading is catalyzed by the alpha/beta hydrolase fold enzyme FMN3 (PubMed:36137261).</text>
</comment>
<comment type="cofactor">
    <cofactor evidence="2">
        <name>pantetheine 4'-phosphate</name>
        <dbReference type="ChEBI" id="CHEBI:47942"/>
    </cofactor>
</comment>
<comment type="pathway">
    <text evidence="5">Secondary metabolite biosynthesis.</text>
</comment>
<comment type="induction">
    <text evidence="5">Expression is induced when NaNO(3) is used as sole nitrogen source (PubMed:36137261). Expression is positively regulated by the cluster-specific transcription factor FMN4 (PubMed:36137261).</text>
</comment>
<comment type="domain">
    <text evidence="8">Multidomain protein; including a ketosynthase (KS) that catalyzes repeated decarboxylative condensation to elongate the polyketide backbone; a malonyl-CoA:ACP transacylase (MAT) that selects and transfers the extender unit malonyl-CoA; a dehydratase (DH) domain that reduces hydroxyl groups to enoyl groups; a methyltransferase (MT) domain responsible for the incorporation of methyl groups; a ketoreductase (KR) domain that catalyzes beta-ketoreduction steps; and an acyl-carrier protein (ACP) that serves as the tether of the growing and completed polyketide via its phosphopantetheinyl arm.</text>
</comment>
<comment type="disruption phenotype">
    <text evidence="5">Impairs the production of fusamarins.</text>
</comment>
<protein>
    <recommendedName>
        <fullName evidence="7">Reducing polyketide synthase 8</fullName>
        <shortName evidence="7">PKS8</shortName>
        <ecNumber evidence="8">2.3.1.-</ecNumber>
    </recommendedName>
    <alternativeName>
        <fullName evidence="6">Fusamarins biosynthesis cluster protein 1</fullName>
    </alternativeName>
</protein>
<gene>
    <name evidence="6" type="primary">FMN1</name>
    <name evidence="7" type="synonym">PKS8</name>
    <name type="ORF">FMAN_15223</name>
</gene>
<reference key="1">
    <citation type="journal article" date="2016" name="Genome Biol. Evol.">
        <title>Comparative 'omics' of the Fusarium fujikuroi species complex highlights differences in genetic potential and metabolite synthesis.</title>
        <authorList>
            <person name="Niehaus E.-M."/>
            <person name="Muensterkoetter M."/>
            <person name="Proctor R.H."/>
            <person name="Brown D.W."/>
            <person name="Sharon A."/>
            <person name="Idan Y."/>
            <person name="Oren-Young L."/>
            <person name="Sieber C.M."/>
            <person name="Novak O."/>
            <person name="Pencik A."/>
            <person name="Tarkowska D."/>
            <person name="Hromadova K."/>
            <person name="Freeman S."/>
            <person name="Maymon M."/>
            <person name="Elazar M."/>
            <person name="Youssef S.A."/>
            <person name="El-Shabrawy E.S.M."/>
            <person name="Shalaby A.B.A."/>
            <person name="Houterman P."/>
            <person name="Brock N.L."/>
            <person name="Burkhardt I."/>
            <person name="Tsavkelova E.A."/>
            <person name="Dickschat J.S."/>
            <person name="Galuszka P."/>
            <person name="Gueldener U."/>
            <person name="Tudzynski B."/>
        </authorList>
    </citation>
    <scope>NUCLEOTIDE SEQUENCE [LARGE SCALE GENOMIC DNA]</scope>
    <source>
        <strain>MRC7560</strain>
    </source>
</reference>
<reference key="2">
    <citation type="journal article" date="2021" name="Front. Fungal Biol.">
        <title>Biosynthesis of fusapyrone depends on the H3K9 methyltransferase, FmKmt1, in Fusarium mangiferae.</title>
        <authorList>
            <person name="Atanasoff-Kardjalieff A.K."/>
            <person name="Luenne F."/>
            <person name="Kalinina S."/>
            <person name="Strauss J."/>
            <person name="Humpf H.U."/>
            <person name="Studt-Reinhold L."/>
        </authorList>
    </citation>
    <scope>FUNCTION</scope>
    <scope>INDUCTION</scope>
    <scope>DISRUPTION PHENOTYPE</scope>
</reference>
<reference key="3">
    <citation type="journal article" date="2022" name="ChemBioChem">
        <title>Biosynthesis of the isocoumarin derivatives fusamarins is mediated by the PKS8 gene cluster in Fusarium.</title>
        <authorList>
            <person name="Atanasoff-Kardjalieff A.K."/>
            <person name="Seidl B."/>
            <person name="Steinert K."/>
            <person name="Daniliuc C.G."/>
            <person name="Schuhmacher R."/>
            <person name="Humpf H.U."/>
            <person name="Kalinina S."/>
            <person name="Studt-Reinhold L."/>
        </authorList>
    </citation>
    <scope>FUNCTION</scope>
    <scope>DOMAIN</scope>
    <scope>INDUCTION</scope>
    <scope>DISRUPTION PHENOTYPE</scope>
    <scope>PATHWAY</scope>
</reference>